<gene>
    <name type="ordered locus">ZMO0013</name>
</gene>
<organism>
    <name type="scientific">Zymomonas mobilis subsp. mobilis (strain ATCC 31821 / ZM4 / CP4)</name>
    <dbReference type="NCBI Taxonomy" id="264203"/>
    <lineage>
        <taxon>Bacteria</taxon>
        <taxon>Pseudomonadati</taxon>
        <taxon>Pseudomonadota</taxon>
        <taxon>Alphaproteobacteria</taxon>
        <taxon>Sphingomonadales</taxon>
        <taxon>Zymomonadaceae</taxon>
        <taxon>Zymomonas</taxon>
    </lineage>
</organism>
<name>IXTPA_ZYMMO</name>
<evidence type="ECO:0000255" key="1">
    <source>
        <dbReference type="HAMAP-Rule" id="MF_01405"/>
    </source>
</evidence>
<feature type="chain" id="PRO_0000178273" description="dITP/XTP pyrophosphatase">
    <location>
        <begin position="1"/>
        <end position="209"/>
    </location>
</feature>
<feature type="active site" description="Proton acceptor" evidence="1">
    <location>
        <position position="83"/>
    </location>
</feature>
<feature type="binding site" evidence="1">
    <location>
        <begin position="22"/>
        <end position="27"/>
    </location>
    <ligand>
        <name>substrate</name>
    </ligand>
</feature>
<feature type="binding site" evidence="1">
    <location>
        <position position="83"/>
    </location>
    <ligand>
        <name>Mg(2+)</name>
        <dbReference type="ChEBI" id="CHEBI:18420"/>
    </ligand>
</feature>
<feature type="binding site" evidence="1">
    <location>
        <position position="84"/>
    </location>
    <ligand>
        <name>substrate</name>
    </ligand>
</feature>
<feature type="binding site" evidence="1">
    <location>
        <begin position="167"/>
        <end position="170"/>
    </location>
    <ligand>
        <name>substrate</name>
    </ligand>
</feature>
<feature type="binding site" evidence="1">
    <location>
        <position position="190"/>
    </location>
    <ligand>
        <name>substrate</name>
    </ligand>
</feature>
<feature type="binding site" evidence="1">
    <location>
        <begin position="195"/>
        <end position="196"/>
    </location>
    <ligand>
        <name>substrate</name>
    </ligand>
</feature>
<protein>
    <recommendedName>
        <fullName evidence="1">dITP/XTP pyrophosphatase</fullName>
        <ecNumber evidence="1">3.6.1.66</ecNumber>
    </recommendedName>
    <alternativeName>
        <fullName evidence="1">Non-canonical purine NTP pyrophosphatase</fullName>
    </alternativeName>
    <alternativeName>
        <fullName evidence="1">Non-standard purine NTP pyrophosphatase</fullName>
    </alternativeName>
    <alternativeName>
        <fullName evidence="1">Nucleoside-triphosphate diphosphatase</fullName>
    </alternativeName>
    <alternativeName>
        <fullName evidence="1">Nucleoside-triphosphate pyrophosphatase</fullName>
        <shortName evidence="1">NTPase</shortName>
    </alternativeName>
</protein>
<accession>Q5NRL7</accession>
<comment type="function">
    <text evidence="1">Pyrophosphatase that catalyzes the hydrolysis of nucleoside triphosphates to their monophosphate derivatives, with a high preference for the non-canonical purine nucleotides XTP (xanthosine triphosphate), dITP (deoxyinosine triphosphate) and ITP. Seems to function as a house-cleaning enzyme that removes non-canonical purine nucleotides from the nucleotide pool, thus preventing their incorporation into DNA/RNA and avoiding chromosomal lesions.</text>
</comment>
<comment type="catalytic activity">
    <reaction evidence="1">
        <text>XTP + H2O = XMP + diphosphate + H(+)</text>
        <dbReference type="Rhea" id="RHEA:28610"/>
        <dbReference type="ChEBI" id="CHEBI:15377"/>
        <dbReference type="ChEBI" id="CHEBI:15378"/>
        <dbReference type="ChEBI" id="CHEBI:33019"/>
        <dbReference type="ChEBI" id="CHEBI:57464"/>
        <dbReference type="ChEBI" id="CHEBI:61314"/>
        <dbReference type="EC" id="3.6.1.66"/>
    </reaction>
</comment>
<comment type="catalytic activity">
    <reaction evidence="1">
        <text>dITP + H2O = dIMP + diphosphate + H(+)</text>
        <dbReference type="Rhea" id="RHEA:28342"/>
        <dbReference type="ChEBI" id="CHEBI:15377"/>
        <dbReference type="ChEBI" id="CHEBI:15378"/>
        <dbReference type="ChEBI" id="CHEBI:33019"/>
        <dbReference type="ChEBI" id="CHEBI:61194"/>
        <dbReference type="ChEBI" id="CHEBI:61382"/>
        <dbReference type="EC" id="3.6.1.66"/>
    </reaction>
</comment>
<comment type="catalytic activity">
    <reaction evidence="1">
        <text>ITP + H2O = IMP + diphosphate + H(+)</text>
        <dbReference type="Rhea" id="RHEA:29399"/>
        <dbReference type="ChEBI" id="CHEBI:15377"/>
        <dbReference type="ChEBI" id="CHEBI:15378"/>
        <dbReference type="ChEBI" id="CHEBI:33019"/>
        <dbReference type="ChEBI" id="CHEBI:58053"/>
        <dbReference type="ChEBI" id="CHEBI:61402"/>
        <dbReference type="EC" id="3.6.1.66"/>
    </reaction>
</comment>
<comment type="cofactor">
    <cofactor evidence="1">
        <name>Mg(2+)</name>
        <dbReference type="ChEBI" id="CHEBI:18420"/>
    </cofactor>
    <text evidence="1">Binds 1 Mg(2+) ion per subunit.</text>
</comment>
<comment type="subunit">
    <text evidence="1">Homodimer.</text>
</comment>
<comment type="similarity">
    <text evidence="1">Belongs to the HAM1 NTPase family.</text>
</comment>
<dbReference type="EC" id="3.6.1.66" evidence="1"/>
<dbReference type="EMBL" id="AE008692">
    <property type="protein sequence ID" value="AAV88637.1"/>
    <property type="molecule type" value="Genomic_DNA"/>
</dbReference>
<dbReference type="SMR" id="Q5NRL7"/>
<dbReference type="STRING" id="264203.ZMO0013"/>
<dbReference type="KEGG" id="zmo:ZMO0013"/>
<dbReference type="eggNOG" id="COG0127">
    <property type="taxonomic scope" value="Bacteria"/>
</dbReference>
<dbReference type="HOGENOM" id="CLU_082080_0_0_5"/>
<dbReference type="Proteomes" id="UP000001173">
    <property type="component" value="Chromosome"/>
</dbReference>
<dbReference type="GO" id="GO:0005829">
    <property type="term" value="C:cytosol"/>
    <property type="evidence" value="ECO:0007669"/>
    <property type="project" value="TreeGrafter"/>
</dbReference>
<dbReference type="GO" id="GO:0035870">
    <property type="term" value="F:dITP diphosphatase activity"/>
    <property type="evidence" value="ECO:0007669"/>
    <property type="project" value="RHEA"/>
</dbReference>
<dbReference type="GO" id="GO:0036220">
    <property type="term" value="F:ITP diphosphatase activity"/>
    <property type="evidence" value="ECO:0007669"/>
    <property type="project" value="UniProtKB-EC"/>
</dbReference>
<dbReference type="GO" id="GO:0046872">
    <property type="term" value="F:metal ion binding"/>
    <property type="evidence" value="ECO:0007669"/>
    <property type="project" value="UniProtKB-KW"/>
</dbReference>
<dbReference type="GO" id="GO:0000166">
    <property type="term" value="F:nucleotide binding"/>
    <property type="evidence" value="ECO:0007669"/>
    <property type="project" value="UniProtKB-KW"/>
</dbReference>
<dbReference type="GO" id="GO:0017111">
    <property type="term" value="F:ribonucleoside triphosphate phosphatase activity"/>
    <property type="evidence" value="ECO:0007669"/>
    <property type="project" value="InterPro"/>
</dbReference>
<dbReference type="GO" id="GO:0036222">
    <property type="term" value="F:XTP diphosphatase activity"/>
    <property type="evidence" value="ECO:0007669"/>
    <property type="project" value="RHEA"/>
</dbReference>
<dbReference type="GO" id="GO:0009117">
    <property type="term" value="P:nucleotide metabolic process"/>
    <property type="evidence" value="ECO:0007669"/>
    <property type="project" value="UniProtKB-KW"/>
</dbReference>
<dbReference type="GO" id="GO:0009146">
    <property type="term" value="P:purine nucleoside triphosphate catabolic process"/>
    <property type="evidence" value="ECO:0007669"/>
    <property type="project" value="UniProtKB-UniRule"/>
</dbReference>
<dbReference type="CDD" id="cd00515">
    <property type="entry name" value="HAM1"/>
    <property type="match status" value="1"/>
</dbReference>
<dbReference type="FunFam" id="3.90.950.10:FF:000001">
    <property type="entry name" value="dITP/XTP pyrophosphatase"/>
    <property type="match status" value="1"/>
</dbReference>
<dbReference type="Gene3D" id="3.90.950.10">
    <property type="match status" value="1"/>
</dbReference>
<dbReference type="HAMAP" id="MF_01405">
    <property type="entry name" value="Non_canon_purine_NTPase"/>
    <property type="match status" value="1"/>
</dbReference>
<dbReference type="InterPro" id="IPR020922">
    <property type="entry name" value="dITP/XTP_pyrophosphatase"/>
</dbReference>
<dbReference type="InterPro" id="IPR029001">
    <property type="entry name" value="ITPase-like_fam"/>
</dbReference>
<dbReference type="InterPro" id="IPR002637">
    <property type="entry name" value="RdgB/HAM1"/>
</dbReference>
<dbReference type="NCBIfam" id="TIGR00042">
    <property type="entry name" value="RdgB/HAM1 family non-canonical purine NTP pyrophosphatase"/>
    <property type="match status" value="1"/>
</dbReference>
<dbReference type="PANTHER" id="PTHR11067:SF9">
    <property type="entry name" value="INOSINE TRIPHOSPHATE PYROPHOSPHATASE"/>
    <property type="match status" value="1"/>
</dbReference>
<dbReference type="PANTHER" id="PTHR11067">
    <property type="entry name" value="INOSINE TRIPHOSPHATE PYROPHOSPHATASE/HAM1 PROTEIN"/>
    <property type="match status" value="1"/>
</dbReference>
<dbReference type="Pfam" id="PF01725">
    <property type="entry name" value="Ham1p_like"/>
    <property type="match status" value="1"/>
</dbReference>
<dbReference type="SUPFAM" id="SSF52972">
    <property type="entry name" value="ITPase-like"/>
    <property type="match status" value="1"/>
</dbReference>
<sequence>MTQTHSSEKRRRLEPGRLVLASHNQGKLREIRELLSPFGLETVSAAELGLPEPVEDGNSFIANAEIKARFVAEKTGSVALADDSGLCVEALDEAPGIYSARWAGEPRDFDKAMEKVHQELTAKGAEASKRAHFVCALSLCWPDGHVENFEGHVWGNLIWPPRGDRGFGYDPMFVADGHQQSFAEIGAEAKKAISHRSEAFKQLLAACLR</sequence>
<reference key="1">
    <citation type="journal article" date="2005" name="Nat. Biotechnol.">
        <title>The genome sequence of the ethanologenic bacterium Zymomonas mobilis ZM4.</title>
        <authorList>
            <person name="Seo J.-S."/>
            <person name="Chong H."/>
            <person name="Park H.S."/>
            <person name="Yoon K.-O."/>
            <person name="Jung C."/>
            <person name="Kim J.J."/>
            <person name="Hong J.H."/>
            <person name="Kim H."/>
            <person name="Kim J.-H."/>
            <person name="Kil J.-I."/>
            <person name="Park C.J."/>
            <person name="Oh H.-M."/>
            <person name="Lee J.-S."/>
            <person name="Jin S.-J."/>
            <person name="Um H.-W."/>
            <person name="Lee H.-J."/>
            <person name="Oh S.-J."/>
            <person name="Kim J.Y."/>
            <person name="Kang H.L."/>
            <person name="Lee S.Y."/>
            <person name="Lee K.J."/>
            <person name="Kang H.S."/>
        </authorList>
    </citation>
    <scope>NUCLEOTIDE SEQUENCE [LARGE SCALE GENOMIC DNA]</scope>
    <source>
        <strain>ATCC 31821 / ZM4 / CP4</strain>
    </source>
</reference>
<keyword id="KW-0378">Hydrolase</keyword>
<keyword id="KW-0460">Magnesium</keyword>
<keyword id="KW-0479">Metal-binding</keyword>
<keyword id="KW-0546">Nucleotide metabolism</keyword>
<keyword id="KW-0547">Nucleotide-binding</keyword>
<keyword id="KW-1185">Reference proteome</keyword>
<proteinExistence type="inferred from homology"/>